<organism>
    <name type="scientific">Salmonella typhi</name>
    <dbReference type="NCBI Taxonomy" id="90370"/>
    <lineage>
        <taxon>Bacteria</taxon>
        <taxon>Pseudomonadati</taxon>
        <taxon>Pseudomonadota</taxon>
        <taxon>Gammaproteobacteria</taxon>
        <taxon>Enterobacterales</taxon>
        <taxon>Enterobacteriaceae</taxon>
        <taxon>Salmonella</taxon>
    </lineage>
</organism>
<keyword id="KW-0413">Isomerase</keyword>
<keyword id="KW-0698">rRNA processing</keyword>
<keyword id="KW-0819">tRNA processing</keyword>
<reference key="1">
    <citation type="journal article" date="2001" name="Nature">
        <title>Complete genome sequence of a multiple drug resistant Salmonella enterica serovar Typhi CT18.</title>
        <authorList>
            <person name="Parkhill J."/>
            <person name="Dougan G."/>
            <person name="James K.D."/>
            <person name="Thomson N.R."/>
            <person name="Pickard D."/>
            <person name="Wain J."/>
            <person name="Churcher C.M."/>
            <person name="Mungall K.L."/>
            <person name="Bentley S.D."/>
            <person name="Holden M.T.G."/>
            <person name="Sebaihia M."/>
            <person name="Baker S."/>
            <person name="Basham D."/>
            <person name="Brooks K."/>
            <person name="Chillingworth T."/>
            <person name="Connerton P."/>
            <person name="Cronin A."/>
            <person name="Davis P."/>
            <person name="Davies R.M."/>
            <person name="Dowd L."/>
            <person name="White N."/>
            <person name="Farrar J."/>
            <person name="Feltwell T."/>
            <person name="Hamlin N."/>
            <person name="Haque A."/>
            <person name="Hien T.T."/>
            <person name="Holroyd S."/>
            <person name="Jagels K."/>
            <person name="Krogh A."/>
            <person name="Larsen T.S."/>
            <person name="Leather S."/>
            <person name="Moule S."/>
            <person name="O'Gaora P."/>
            <person name="Parry C."/>
            <person name="Quail M.A."/>
            <person name="Rutherford K.M."/>
            <person name="Simmonds M."/>
            <person name="Skelton J."/>
            <person name="Stevens K."/>
            <person name="Whitehead S."/>
            <person name="Barrell B.G."/>
        </authorList>
    </citation>
    <scope>NUCLEOTIDE SEQUENCE [LARGE SCALE GENOMIC DNA]</scope>
    <source>
        <strain>CT18</strain>
    </source>
</reference>
<reference key="2">
    <citation type="journal article" date="2003" name="J. Bacteriol.">
        <title>Comparative genomics of Salmonella enterica serovar Typhi strains Ty2 and CT18.</title>
        <authorList>
            <person name="Deng W."/>
            <person name="Liou S.-R."/>
            <person name="Plunkett G. III"/>
            <person name="Mayhew G.F."/>
            <person name="Rose D.J."/>
            <person name="Burland V."/>
            <person name="Kodoyianni V."/>
            <person name="Schwartz D.C."/>
            <person name="Blattner F.R."/>
        </authorList>
    </citation>
    <scope>NUCLEOTIDE SEQUENCE [LARGE SCALE GENOMIC DNA]</scope>
    <source>
        <strain>ATCC 700931 / Ty2</strain>
    </source>
</reference>
<proteinExistence type="inferred from homology"/>
<sequence length="219" mass="24770">MGMENYNPPQEPWLVILYQDEHIMVVNKPSGLLSVPGRLEAHKDSIMTRIQRDYPQAESVHRLDMATSGVIVVALTKAAERELKRQFREREPKKQYVARVWGHPSPAEGLVDLPLICDWPNRPKQKVCYETGKPAQTEYNVVEFAADNTARVVLKPITGRSHQLRVHMLALGHPILGDQFYASPEALSLAPRLQLHAEMLTITHPAYGNSMTFKVPADF</sequence>
<comment type="function">
    <text evidence="1">Dual specificity enzyme that catalyzes the synthesis of pseudouridine from uracil-746 in 23S ribosomal RNA and from uracil-32 in the anticodon stem and loop of transfer RNAs.</text>
</comment>
<comment type="catalytic activity">
    <reaction evidence="1">
        <text>uridine(32) in tRNA = pseudouridine(32) in tRNA</text>
        <dbReference type="Rhea" id="RHEA:42544"/>
        <dbReference type="Rhea" id="RHEA-COMP:10107"/>
        <dbReference type="Rhea" id="RHEA-COMP:10108"/>
        <dbReference type="ChEBI" id="CHEBI:65314"/>
        <dbReference type="ChEBI" id="CHEBI:65315"/>
        <dbReference type="EC" id="5.4.99.28"/>
    </reaction>
</comment>
<comment type="catalytic activity">
    <reaction evidence="1">
        <text>uridine(746) in 23S rRNA = pseudouridine(746) in 23S rRNA</text>
        <dbReference type="Rhea" id="RHEA:42548"/>
        <dbReference type="Rhea" id="RHEA-COMP:10109"/>
        <dbReference type="Rhea" id="RHEA-COMP:10110"/>
        <dbReference type="ChEBI" id="CHEBI:65314"/>
        <dbReference type="ChEBI" id="CHEBI:65315"/>
        <dbReference type="EC" id="5.4.99.29"/>
    </reaction>
</comment>
<comment type="similarity">
    <text evidence="2">Belongs to the pseudouridine synthase RluA family.</text>
</comment>
<feature type="initiator methionine" description="Removed" evidence="1">
    <location>
        <position position="1"/>
    </location>
</feature>
<feature type="chain" id="PRO_0000162657" description="Dual-specificity RNA pseudouridine synthase RluA">
    <location>
        <begin position="2"/>
        <end position="219"/>
    </location>
</feature>
<feature type="active site" evidence="1">
    <location>
        <position position="64"/>
    </location>
</feature>
<evidence type="ECO:0000250" key="1">
    <source>
        <dbReference type="UniProtKB" id="P0AA37"/>
    </source>
</evidence>
<evidence type="ECO:0000305" key="2"/>
<name>RLUA_SALTI</name>
<gene>
    <name type="primary">rluA</name>
    <name type="ordered locus">STY0110</name>
    <name type="ordered locus">t0098</name>
</gene>
<accession>Q8Z9J5</accession>
<dbReference type="EC" id="5.4.99.28" evidence="1"/>
<dbReference type="EC" id="5.4.99.29" evidence="1"/>
<dbReference type="EMBL" id="AL513382">
    <property type="protein sequence ID" value="CAD01251.1"/>
    <property type="molecule type" value="Genomic_DNA"/>
</dbReference>
<dbReference type="EMBL" id="AE014613">
    <property type="protein sequence ID" value="AAO67831.1"/>
    <property type="molecule type" value="Genomic_DNA"/>
</dbReference>
<dbReference type="RefSeq" id="NP_454707.1">
    <property type="nucleotide sequence ID" value="NC_003198.1"/>
</dbReference>
<dbReference type="RefSeq" id="WP_000525195.1">
    <property type="nucleotide sequence ID" value="NZ_WSUR01000028.1"/>
</dbReference>
<dbReference type="SMR" id="Q8Z9J5"/>
<dbReference type="STRING" id="220341.gene:17584153"/>
<dbReference type="KEGG" id="stt:t0098"/>
<dbReference type="KEGG" id="sty:STY0110"/>
<dbReference type="PATRIC" id="fig|220341.7.peg.110"/>
<dbReference type="eggNOG" id="COG0564">
    <property type="taxonomic scope" value="Bacteria"/>
</dbReference>
<dbReference type="HOGENOM" id="CLU_016902_11_1_6"/>
<dbReference type="OMA" id="YGFCEPA"/>
<dbReference type="OrthoDB" id="9807829at2"/>
<dbReference type="Proteomes" id="UP000000541">
    <property type="component" value="Chromosome"/>
</dbReference>
<dbReference type="Proteomes" id="UP000002670">
    <property type="component" value="Chromosome"/>
</dbReference>
<dbReference type="GO" id="GO:0160142">
    <property type="term" value="F:23S rRNA pseudouridine(746) synthase activity"/>
    <property type="evidence" value="ECO:0007669"/>
    <property type="project" value="UniProtKB-EC"/>
</dbReference>
<dbReference type="GO" id="GO:0003723">
    <property type="term" value="F:RNA binding"/>
    <property type="evidence" value="ECO:0007669"/>
    <property type="project" value="InterPro"/>
</dbReference>
<dbReference type="GO" id="GO:0160151">
    <property type="term" value="F:tRNA pseudouridine(32) synthase activity"/>
    <property type="evidence" value="ECO:0007669"/>
    <property type="project" value="UniProtKB-EC"/>
</dbReference>
<dbReference type="GO" id="GO:0000455">
    <property type="term" value="P:enzyme-directed rRNA pseudouridine synthesis"/>
    <property type="evidence" value="ECO:0007669"/>
    <property type="project" value="TreeGrafter"/>
</dbReference>
<dbReference type="GO" id="GO:0008033">
    <property type="term" value="P:tRNA processing"/>
    <property type="evidence" value="ECO:0007669"/>
    <property type="project" value="UniProtKB-KW"/>
</dbReference>
<dbReference type="CDD" id="cd02869">
    <property type="entry name" value="PseudoU_synth_RluA_like"/>
    <property type="match status" value="1"/>
</dbReference>
<dbReference type="FunFam" id="3.30.2350.10:FF:000005">
    <property type="entry name" value="Pseudouridine synthase"/>
    <property type="match status" value="1"/>
</dbReference>
<dbReference type="Gene3D" id="3.30.2350.10">
    <property type="entry name" value="Pseudouridine synthase"/>
    <property type="match status" value="1"/>
</dbReference>
<dbReference type="InterPro" id="IPR020103">
    <property type="entry name" value="PsdUridine_synth_cat_dom_sf"/>
</dbReference>
<dbReference type="InterPro" id="IPR006224">
    <property type="entry name" value="PsdUridine_synth_RluA-like_CS"/>
</dbReference>
<dbReference type="InterPro" id="IPR006225">
    <property type="entry name" value="PsdUridine_synth_RluC/D"/>
</dbReference>
<dbReference type="InterPro" id="IPR006145">
    <property type="entry name" value="PsdUridine_synth_RsuA/RluA"/>
</dbReference>
<dbReference type="InterPro" id="IPR050188">
    <property type="entry name" value="RluA_PseudoU_synthase"/>
</dbReference>
<dbReference type="NCBIfam" id="NF007543">
    <property type="entry name" value="PRK10158.1"/>
    <property type="match status" value="1"/>
</dbReference>
<dbReference type="NCBIfam" id="TIGR00005">
    <property type="entry name" value="rluA_subfam"/>
    <property type="match status" value="1"/>
</dbReference>
<dbReference type="PANTHER" id="PTHR21600:SF91">
    <property type="entry name" value="DUAL-SPECIFICITY RNA PSEUDOURIDINE SYNTHASE RLUA"/>
    <property type="match status" value="1"/>
</dbReference>
<dbReference type="PANTHER" id="PTHR21600">
    <property type="entry name" value="MITOCHONDRIAL RNA PSEUDOURIDINE SYNTHASE"/>
    <property type="match status" value="1"/>
</dbReference>
<dbReference type="Pfam" id="PF00849">
    <property type="entry name" value="PseudoU_synth_2"/>
    <property type="match status" value="1"/>
</dbReference>
<dbReference type="SUPFAM" id="SSF55120">
    <property type="entry name" value="Pseudouridine synthase"/>
    <property type="match status" value="1"/>
</dbReference>
<dbReference type="PROSITE" id="PS01129">
    <property type="entry name" value="PSI_RLU"/>
    <property type="match status" value="1"/>
</dbReference>
<protein>
    <recommendedName>
        <fullName evidence="1">Dual-specificity RNA pseudouridine synthase RluA</fullName>
        <ecNumber evidence="1">5.4.99.28</ecNumber>
        <ecNumber evidence="1">5.4.99.29</ecNumber>
    </recommendedName>
    <alternativeName>
        <fullName evidence="1">23S rRNA pseudouridine(746) synthase</fullName>
    </alternativeName>
    <alternativeName>
        <fullName evidence="1">Ribosomal large subunit pseudouridine synthase A</fullName>
    </alternativeName>
    <alternativeName>
        <fullName evidence="1">rRNA pseudouridylate synthase A</fullName>
    </alternativeName>
    <alternativeName>
        <fullName evidence="1">rRNA-uridine isomerase A</fullName>
    </alternativeName>
    <alternativeName>
        <fullName evidence="1">tRNA pseudouridine(32) synthase</fullName>
    </alternativeName>
</protein>